<gene>
    <name evidence="1" type="primary">thyA</name>
    <name type="ordered locus">GTNG_1671</name>
</gene>
<evidence type="ECO:0000255" key="1">
    <source>
        <dbReference type="HAMAP-Rule" id="MF_00008"/>
    </source>
</evidence>
<keyword id="KW-0963">Cytoplasm</keyword>
<keyword id="KW-0489">Methyltransferase</keyword>
<keyword id="KW-0545">Nucleotide biosynthesis</keyword>
<keyword id="KW-0808">Transferase</keyword>
<name>TYSY_GEOTN</name>
<accession>A4INY1</accession>
<proteinExistence type="inferred from homology"/>
<reference key="1">
    <citation type="journal article" date="2007" name="Proc. Natl. Acad. Sci. U.S.A.">
        <title>Genome and proteome of long-chain alkane degrading Geobacillus thermodenitrificans NG80-2 isolated from a deep-subsurface oil reservoir.</title>
        <authorList>
            <person name="Feng L."/>
            <person name="Wang W."/>
            <person name="Cheng J."/>
            <person name="Ren Y."/>
            <person name="Zhao G."/>
            <person name="Gao C."/>
            <person name="Tang Y."/>
            <person name="Liu X."/>
            <person name="Han W."/>
            <person name="Peng X."/>
            <person name="Liu R."/>
            <person name="Wang L."/>
        </authorList>
    </citation>
    <scope>NUCLEOTIDE SEQUENCE [LARGE SCALE GENOMIC DNA]</scope>
    <source>
        <strain>NG80-2</strain>
    </source>
</reference>
<sequence length="264" mass="30345">MRQYLQLLEDILENGVEKEDRTGVGTLSVFGRQLRFNLQDGFPLVTTKKLHIRSIIYELLWFLKGDTNVRYLQENGVTIWDEWADENGDLGPVYGAQWRSWKGADGKTVDQIASVVEEIKRNPNSRRLLVNAWNVAELDKMKLPPCHYAFQFYVANGRLSCMWQQRSVDTFLGLPFNIASYALLTHMIAEQCGLDVGELIFTGGDVHLYKNHIEQAKLQLTREPRPLPKLVLKRKPSSIFDYEYDDFEIVGYDPHPTIKAPVAV</sequence>
<organism>
    <name type="scientific">Geobacillus thermodenitrificans (strain NG80-2)</name>
    <dbReference type="NCBI Taxonomy" id="420246"/>
    <lineage>
        <taxon>Bacteria</taxon>
        <taxon>Bacillati</taxon>
        <taxon>Bacillota</taxon>
        <taxon>Bacilli</taxon>
        <taxon>Bacillales</taxon>
        <taxon>Anoxybacillaceae</taxon>
        <taxon>Geobacillus</taxon>
    </lineage>
</organism>
<protein>
    <recommendedName>
        <fullName evidence="1">Thymidylate synthase</fullName>
        <shortName evidence="1">TS</shortName>
        <shortName evidence="1">TSase</shortName>
        <ecNumber evidence="1">2.1.1.45</ecNumber>
    </recommendedName>
</protein>
<comment type="function">
    <text evidence="1">Catalyzes the reductive methylation of 2'-deoxyuridine-5'-monophosphate (dUMP) to 2'-deoxythymidine-5'-monophosphate (dTMP) while utilizing 5,10-methylenetetrahydrofolate (mTHF) as the methyl donor and reductant in the reaction, yielding dihydrofolate (DHF) as a by-product. This enzymatic reaction provides an intracellular de novo source of dTMP, an essential precursor for DNA biosynthesis.</text>
</comment>
<comment type="catalytic activity">
    <reaction evidence="1">
        <text>dUMP + (6R)-5,10-methylene-5,6,7,8-tetrahydrofolate = 7,8-dihydrofolate + dTMP</text>
        <dbReference type="Rhea" id="RHEA:12104"/>
        <dbReference type="ChEBI" id="CHEBI:15636"/>
        <dbReference type="ChEBI" id="CHEBI:57451"/>
        <dbReference type="ChEBI" id="CHEBI:63528"/>
        <dbReference type="ChEBI" id="CHEBI:246422"/>
        <dbReference type="EC" id="2.1.1.45"/>
    </reaction>
</comment>
<comment type="pathway">
    <text evidence="1">Pyrimidine metabolism; dTTP biosynthesis.</text>
</comment>
<comment type="subunit">
    <text evidence="1">Homodimer.</text>
</comment>
<comment type="subcellular location">
    <subcellularLocation>
        <location evidence="1">Cytoplasm</location>
    </subcellularLocation>
</comment>
<comment type="similarity">
    <text evidence="1">Belongs to the thymidylate synthase family. Bacterial-type ThyA subfamily.</text>
</comment>
<feature type="chain" id="PRO_1000000603" description="Thymidylate synthase">
    <location>
        <begin position="1"/>
        <end position="264"/>
    </location>
</feature>
<feature type="active site" description="Nucleophile" evidence="1">
    <location>
        <position position="146"/>
    </location>
</feature>
<feature type="binding site" description="in other chain" evidence="1">
    <location>
        <position position="21"/>
    </location>
    <ligand>
        <name>dUMP</name>
        <dbReference type="ChEBI" id="CHEBI:246422"/>
        <note>ligand shared between dimeric partners</note>
    </ligand>
</feature>
<feature type="binding site" evidence="1">
    <location>
        <position position="51"/>
    </location>
    <ligand>
        <name>(6R)-5,10-methylene-5,6,7,8-tetrahydrofolate</name>
        <dbReference type="ChEBI" id="CHEBI:15636"/>
    </ligand>
</feature>
<feature type="binding site" evidence="1">
    <location>
        <begin position="126"/>
        <end position="127"/>
    </location>
    <ligand>
        <name>dUMP</name>
        <dbReference type="ChEBI" id="CHEBI:246422"/>
        <note>ligand shared between dimeric partners</note>
    </ligand>
</feature>
<feature type="binding site" description="in other chain" evidence="1">
    <location>
        <begin position="166"/>
        <end position="169"/>
    </location>
    <ligand>
        <name>dUMP</name>
        <dbReference type="ChEBI" id="CHEBI:246422"/>
        <note>ligand shared between dimeric partners</note>
    </ligand>
</feature>
<feature type="binding site" evidence="1">
    <location>
        <position position="169"/>
    </location>
    <ligand>
        <name>(6R)-5,10-methylene-5,6,7,8-tetrahydrofolate</name>
        <dbReference type="ChEBI" id="CHEBI:15636"/>
    </ligand>
</feature>
<feature type="binding site" description="in other chain" evidence="1">
    <location>
        <position position="177"/>
    </location>
    <ligand>
        <name>dUMP</name>
        <dbReference type="ChEBI" id="CHEBI:246422"/>
        <note>ligand shared between dimeric partners</note>
    </ligand>
</feature>
<feature type="binding site" description="in other chain" evidence="1">
    <location>
        <begin position="207"/>
        <end position="209"/>
    </location>
    <ligand>
        <name>dUMP</name>
        <dbReference type="ChEBI" id="CHEBI:246422"/>
        <note>ligand shared between dimeric partners</note>
    </ligand>
</feature>
<feature type="binding site" evidence="1">
    <location>
        <position position="263"/>
    </location>
    <ligand>
        <name>(6R)-5,10-methylene-5,6,7,8-tetrahydrofolate</name>
        <dbReference type="ChEBI" id="CHEBI:15636"/>
    </ligand>
</feature>
<dbReference type="EC" id="2.1.1.45" evidence="1"/>
<dbReference type="EMBL" id="CP000557">
    <property type="protein sequence ID" value="ABO67035.1"/>
    <property type="molecule type" value="Genomic_DNA"/>
</dbReference>
<dbReference type="RefSeq" id="WP_011887460.1">
    <property type="nucleotide sequence ID" value="NC_009328.1"/>
</dbReference>
<dbReference type="SMR" id="A4INY1"/>
<dbReference type="GeneID" id="87620761"/>
<dbReference type="KEGG" id="gtn:GTNG_1671"/>
<dbReference type="eggNOG" id="COG0207">
    <property type="taxonomic scope" value="Bacteria"/>
</dbReference>
<dbReference type="HOGENOM" id="CLU_021669_0_0_9"/>
<dbReference type="UniPathway" id="UPA00575"/>
<dbReference type="Proteomes" id="UP000001578">
    <property type="component" value="Chromosome"/>
</dbReference>
<dbReference type="GO" id="GO:0005829">
    <property type="term" value="C:cytosol"/>
    <property type="evidence" value="ECO:0007669"/>
    <property type="project" value="TreeGrafter"/>
</dbReference>
<dbReference type="GO" id="GO:0004799">
    <property type="term" value="F:thymidylate synthase activity"/>
    <property type="evidence" value="ECO:0007669"/>
    <property type="project" value="UniProtKB-UniRule"/>
</dbReference>
<dbReference type="GO" id="GO:0006231">
    <property type="term" value="P:dTMP biosynthetic process"/>
    <property type="evidence" value="ECO:0007669"/>
    <property type="project" value="UniProtKB-UniRule"/>
</dbReference>
<dbReference type="GO" id="GO:0006235">
    <property type="term" value="P:dTTP biosynthetic process"/>
    <property type="evidence" value="ECO:0007669"/>
    <property type="project" value="UniProtKB-UniRule"/>
</dbReference>
<dbReference type="GO" id="GO:0032259">
    <property type="term" value="P:methylation"/>
    <property type="evidence" value="ECO:0007669"/>
    <property type="project" value="UniProtKB-KW"/>
</dbReference>
<dbReference type="CDD" id="cd00351">
    <property type="entry name" value="TS_Pyrimidine_HMase"/>
    <property type="match status" value="1"/>
</dbReference>
<dbReference type="FunFam" id="3.30.572.10:FF:000001">
    <property type="entry name" value="Thymidylate synthase"/>
    <property type="match status" value="1"/>
</dbReference>
<dbReference type="Gene3D" id="3.30.572.10">
    <property type="entry name" value="Thymidylate synthase/dCMP hydroxymethylase domain"/>
    <property type="match status" value="1"/>
</dbReference>
<dbReference type="HAMAP" id="MF_00008">
    <property type="entry name" value="Thymidy_synth_bact"/>
    <property type="match status" value="1"/>
</dbReference>
<dbReference type="InterPro" id="IPR045097">
    <property type="entry name" value="Thymidate_synth/dCMP_Mease"/>
</dbReference>
<dbReference type="InterPro" id="IPR023451">
    <property type="entry name" value="Thymidate_synth/dCMP_Mease_dom"/>
</dbReference>
<dbReference type="InterPro" id="IPR036926">
    <property type="entry name" value="Thymidate_synth/dCMP_Mease_sf"/>
</dbReference>
<dbReference type="InterPro" id="IPR000398">
    <property type="entry name" value="Thymidylate_synthase"/>
</dbReference>
<dbReference type="InterPro" id="IPR020940">
    <property type="entry name" value="Thymidylate_synthase_AS"/>
</dbReference>
<dbReference type="NCBIfam" id="NF002497">
    <property type="entry name" value="PRK01827.1-3"/>
    <property type="match status" value="1"/>
</dbReference>
<dbReference type="NCBIfam" id="NF002499">
    <property type="entry name" value="PRK01827.1-5"/>
    <property type="match status" value="1"/>
</dbReference>
<dbReference type="NCBIfam" id="TIGR03284">
    <property type="entry name" value="thym_sym"/>
    <property type="match status" value="2"/>
</dbReference>
<dbReference type="PANTHER" id="PTHR11548:SF9">
    <property type="entry name" value="THYMIDYLATE SYNTHASE"/>
    <property type="match status" value="1"/>
</dbReference>
<dbReference type="PANTHER" id="PTHR11548">
    <property type="entry name" value="THYMIDYLATE SYNTHASE 1"/>
    <property type="match status" value="1"/>
</dbReference>
<dbReference type="Pfam" id="PF00303">
    <property type="entry name" value="Thymidylat_synt"/>
    <property type="match status" value="1"/>
</dbReference>
<dbReference type="PRINTS" id="PR00108">
    <property type="entry name" value="THYMDSNTHASE"/>
</dbReference>
<dbReference type="SUPFAM" id="SSF55831">
    <property type="entry name" value="Thymidylate synthase/dCMP hydroxymethylase"/>
    <property type="match status" value="1"/>
</dbReference>
<dbReference type="PROSITE" id="PS00091">
    <property type="entry name" value="THYMIDYLATE_SYNTHASE"/>
    <property type="match status" value="1"/>
</dbReference>